<protein>
    <recommendedName>
        <fullName evidence="11">SET domain-containing protein 4</fullName>
        <ecNumber evidence="1">2.1.1.-</ecNumber>
        <ecNumber evidence="4">2.1.1.364</ecNumber>
    </recommendedName>
</protein>
<organism>
    <name type="scientific">Mus musculus</name>
    <name type="common">Mouse</name>
    <dbReference type="NCBI Taxonomy" id="10090"/>
    <lineage>
        <taxon>Eukaryota</taxon>
        <taxon>Metazoa</taxon>
        <taxon>Chordata</taxon>
        <taxon>Craniata</taxon>
        <taxon>Vertebrata</taxon>
        <taxon>Euteleostomi</taxon>
        <taxon>Mammalia</taxon>
        <taxon>Eutheria</taxon>
        <taxon>Euarchontoglires</taxon>
        <taxon>Glires</taxon>
        <taxon>Rodentia</taxon>
        <taxon>Myomorpha</taxon>
        <taxon>Muroidea</taxon>
        <taxon>Muridae</taxon>
        <taxon>Murinae</taxon>
        <taxon>Mus</taxon>
        <taxon>Mus</taxon>
    </lineage>
</organism>
<name>SETD4_MOUSE</name>
<keyword id="KW-0963">Cytoplasm</keyword>
<keyword id="KW-0395">Inflammatory response</keyword>
<keyword id="KW-0489">Methyltransferase</keyword>
<keyword id="KW-0539">Nucleus</keyword>
<keyword id="KW-1185">Reference proteome</keyword>
<keyword id="KW-0949">S-adenosyl-L-methionine</keyword>
<keyword id="KW-0808">Transferase</keyword>
<feature type="chain" id="PRO_0000079510" description="SET domain-containing protein 4">
    <location>
        <begin position="1"/>
        <end position="439"/>
    </location>
</feature>
<feature type="domain" description="SET" evidence="2">
    <location>
        <begin position="47"/>
        <end position="272"/>
    </location>
</feature>
<feature type="region of interest" description="Disordered" evidence="3">
    <location>
        <begin position="1"/>
        <end position="25"/>
    </location>
</feature>
<feature type="compositionally biased region" description="Basic residues" evidence="3">
    <location>
        <begin position="1"/>
        <end position="19"/>
    </location>
</feature>
<feature type="binding site" evidence="2">
    <location>
        <position position="271"/>
    </location>
    <ligand>
        <name>S-adenosyl-L-methionine</name>
        <dbReference type="ChEBI" id="CHEBI:59789"/>
    </ligand>
</feature>
<feature type="sequence conflict" description="In Ref. 2; AAK68849." evidence="11" ref="2">
    <original>S</original>
    <variation>N</variation>
    <location>
        <position position="408"/>
    </location>
</feature>
<gene>
    <name evidence="10 12" type="primary">Setd4</name>
    <name evidence="9" type="synonym">ORF21</name>
</gene>
<comment type="function">
    <text evidence="1 4 5 7 8">Protein-lysine N-methyltransferase that methylates both histones and non-histone proteins (PubMed:31376731, PubMed:31794893, PubMed:33506343). Via its catalytic activity, regulates many processes, including cell proliferation, cell differentiation, inflammatory response and apoptosis. Regulates the inflammatory response by mediating mono- and dimethylation of 'Lys-4' of histone H3 (H3K4me1 and H3K4me2, respectively), leading to activate the transcription of pro-inflammatory cytokines IL6 and TNF-alpha (PubMed:31376731). Also involved in the regulation of stem cell quiescence by catalyzing the trimethylation of 'Lys-20' of histone H4 (H4K20me3), thereby promoting heterochromatin formation (By similarity) (PubMed:33506343). In the brain, epigenetically controls quiescence of neural stem cells for sustaining a protected neural stem cell population and maintaining a stem cell reservoir for neurogenesis (PubMed:36027907). Involved in proliferation, migration, paracrine and myogenic differentiation of bone marrow mesenchymal stem cells (BMSCs) (PubMed:33506343). Through the catalysis of XRCC5/Ku70 trimethylation, regulates BAX-mediated apoptosis. SETD4-catalyzed XRCC5 methylation results in XRCC5 translocation to the cytoplasm, where it interacts with BAX, sequestering it from the mitochondria, hence preventing BAX-mediated apoptosis (By similarity).</text>
</comment>
<comment type="catalytic activity">
    <reaction evidence="4">
        <text>L-lysyl(4)-[histone H3] + S-adenosyl-L-methionine = N(6)-methyl-L-lysyl(4)-[histone H3] + S-adenosyl-L-homocysteine + H(+)</text>
        <dbReference type="Rhea" id="RHEA:60264"/>
        <dbReference type="Rhea" id="RHEA-COMP:15543"/>
        <dbReference type="Rhea" id="RHEA-COMP:15547"/>
        <dbReference type="ChEBI" id="CHEBI:15378"/>
        <dbReference type="ChEBI" id="CHEBI:29969"/>
        <dbReference type="ChEBI" id="CHEBI:57856"/>
        <dbReference type="ChEBI" id="CHEBI:59789"/>
        <dbReference type="ChEBI" id="CHEBI:61929"/>
        <dbReference type="EC" id="2.1.1.364"/>
    </reaction>
</comment>
<comment type="catalytic activity">
    <reaction evidence="4">
        <text>N(6)-methyl-L-lysyl(4)-[histone H3] + S-adenosyl-L-methionine = N(6),N(6)-dimethyl-L-lysyl(4)-[histone H3] + S-adenosyl-L-homocysteine + H(+)</text>
        <dbReference type="Rhea" id="RHEA:60268"/>
        <dbReference type="Rhea" id="RHEA-COMP:15540"/>
        <dbReference type="Rhea" id="RHEA-COMP:15543"/>
        <dbReference type="ChEBI" id="CHEBI:15378"/>
        <dbReference type="ChEBI" id="CHEBI:57856"/>
        <dbReference type="ChEBI" id="CHEBI:59789"/>
        <dbReference type="ChEBI" id="CHEBI:61929"/>
        <dbReference type="ChEBI" id="CHEBI:61976"/>
    </reaction>
</comment>
<comment type="catalytic activity">
    <reaction evidence="1">
        <text>L-lysyl(20)-[histone H4] + S-adenosyl-L-methionine = N(6)-methyl-L-lysyl(20)-[histone H4] + S-adenosyl-L-homocysteine + H(+)</text>
        <dbReference type="Rhea" id="RHEA:60344"/>
        <dbReference type="Rhea" id="RHEA-COMP:15554"/>
        <dbReference type="Rhea" id="RHEA-COMP:15555"/>
        <dbReference type="ChEBI" id="CHEBI:15378"/>
        <dbReference type="ChEBI" id="CHEBI:29969"/>
        <dbReference type="ChEBI" id="CHEBI:57856"/>
        <dbReference type="ChEBI" id="CHEBI:59789"/>
        <dbReference type="ChEBI" id="CHEBI:61929"/>
    </reaction>
</comment>
<comment type="catalytic activity">
    <reaction evidence="1">
        <text>N(6)-methyl-L-lysyl(20)-[histone H4] + S-adenosyl-L-methionine = N(6),N(6)-dimethyl-L-lysyl(20)-[histone H4] + S-adenosyl-L-homocysteine + H(+)</text>
        <dbReference type="Rhea" id="RHEA:60348"/>
        <dbReference type="Rhea" id="RHEA-COMP:15555"/>
        <dbReference type="Rhea" id="RHEA-COMP:15556"/>
        <dbReference type="ChEBI" id="CHEBI:15378"/>
        <dbReference type="ChEBI" id="CHEBI:57856"/>
        <dbReference type="ChEBI" id="CHEBI:59789"/>
        <dbReference type="ChEBI" id="CHEBI:61929"/>
        <dbReference type="ChEBI" id="CHEBI:61976"/>
    </reaction>
</comment>
<comment type="catalytic activity">
    <reaction evidence="1">
        <text>N(6),N(6)-dimethyl-L-lysyl(20)-[histone H4] + S-adenosyl-L-methionine = N(6),N(6),N(6)-trimethyl-L-lysyl(20)-[histone H4] + S-adenosyl-L-homocysteine + H(+)</text>
        <dbReference type="Rhea" id="RHEA:61992"/>
        <dbReference type="Rhea" id="RHEA-COMP:15556"/>
        <dbReference type="Rhea" id="RHEA-COMP:15998"/>
        <dbReference type="ChEBI" id="CHEBI:15378"/>
        <dbReference type="ChEBI" id="CHEBI:57856"/>
        <dbReference type="ChEBI" id="CHEBI:59789"/>
        <dbReference type="ChEBI" id="CHEBI:61961"/>
        <dbReference type="ChEBI" id="CHEBI:61976"/>
    </reaction>
</comment>
<comment type="catalytic activity">
    <reaction evidence="1">
        <text>L-lysyl-[protein] + S-adenosyl-L-methionine = N(6)-methyl-L-lysyl-[protein] + S-adenosyl-L-homocysteine + H(+)</text>
        <dbReference type="Rhea" id="RHEA:51736"/>
        <dbReference type="Rhea" id="RHEA-COMP:9752"/>
        <dbReference type="Rhea" id="RHEA-COMP:13053"/>
        <dbReference type="ChEBI" id="CHEBI:15378"/>
        <dbReference type="ChEBI" id="CHEBI:29969"/>
        <dbReference type="ChEBI" id="CHEBI:57856"/>
        <dbReference type="ChEBI" id="CHEBI:59789"/>
        <dbReference type="ChEBI" id="CHEBI:61929"/>
    </reaction>
</comment>
<comment type="subunit">
    <text evidence="1">Forms a ternary complex with TBK1 and ZNF268; the interaction with TBK1 is ZNF268-dependent and leads to TBK1 monomethylation.</text>
</comment>
<comment type="subcellular location">
    <subcellularLocation>
        <location evidence="4">Cytoplasm</location>
        <location evidence="4">Cytosol</location>
    </subcellularLocation>
    <subcellularLocation>
        <location evidence="4">Nucleus</location>
    </subcellularLocation>
</comment>
<comment type="tissue specificity">
    <text evidence="8">Expressed in the forebrain subventricular zone, in quiescent neural stem cells.</text>
</comment>
<comment type="developmental stage">
    <text evidence="8">Expressed in some cells of the neuroectoderm at 7.5 dpc.</text>
</comment>
<comment type="disruption phenotype">
    <text evidence="5 6 7">No visible phenotype in normal physiological conditions (PubMed:33506343). Increased proliferation of bone marrow mesenchymal stem cells (BMSCs), impaired BMSCs migration and differentiation potentials of lineages of cardiacmyocyte and smooth muscle cell (PubMed:33506343). Conditional deletion in adult mice improves the survival from radiation-induced hematopoietic failure and thymic lymphoma (PubMed:31794893, PubMed:32259569). Extends survival from radiation-induced thymic lymphoma is likely due to slower tumor enlargement in the thymus (PubMed:31794893).</text>
</comment>
<comment type="similarity">
    <text evidence="2 11">Belongs to the class V-like SAM-binding methyltransferase superfamily. SETD4 family.</text>
</comment>
<sequence>MQRRRGRTERARKRRRRSSGSRAVNESYRSEFIELRKWLKERKFEDTDLVPASFPGTGRGLMSKASLQEGQVMISLPESCLLTTDTVIRSSLGPYIKKWKPPVSPLLALCTFLVSEKHAGCRSLWKSYLDILPKSYTCPVCLEPEVVDLLPSPLKAKAEEQRARVQDLFTSARGFFSTLQPLFAEPVDSVFSYRAFLWAWCTVNTRAVYLRSRRQECLSAEPDTCALAPFLDLLNHSPHVQVKAAFNEKTRCYEIRTASRCRKHQEVFICYGPHDNQRLLLEYGFVSVRNPHACVPVSADMLVKFLPAADKQLHRKITILKDHGFTGNLTFGWDGPSWRLLTALKLLCLEAERFTSWKKVLLGEVISDTNEKTSLGVAQKICSDVIEETHAVLRKVSDMKEGTVSLRSQLSLVEALRMEELRILQASAEILSGLLAPFS</sequence>
<proteinExistence type="evidence at protein level"/>
<evidence type="ECO:0000250" key="1">
    <source>
        <dbReference type="UniProtKB" id="Q9NVD3"/>
    </source>
</evidence>
<evidence type="ECO:0000255" key="2">
    <source>
        <dbReference type="PROSITE-ProRule" id="PRU00190"/>
    </source>
</evidence>
<evidence type="ECO:0000256" key="3">
    <source>
        <dbReference type="SAM" id="MobiDB-lite"/>
    </source>
</evidence>
<evidence type="ECO:0000269" key="4">
    <source>
    </source>
</evidence>
<evidence type="ECO:0000269" key="5">
    <source>
    </source>
</evidence>
<evidence type="ECO:0000269" key="6">
    <source>
    </source>
</evidence>
<evidence type="ECO:0000269" key="7">
    <source>
    </source>
</evidence>
<evidence type="ECO:0000269" key="8">
    <source>
    </source>
</evidence>
<evidence type="ECO:0000303" key="9">
    <source>
    </source>
</evidence>
<evidence type="ECO:0000303" key="10">
    <source>
    </source>
</evidence>
<evidence type="ECO:0000305" key="11"/>
<evidence type="ECO:0000312" key="12">
    <source>
        <dbReference type="MGI" id="MGI:2136890"/>
    </source>
</evidence>
<reference key="1">
    <citation type="journal article" date="2001" name="Genomics">
        <title>From PREDs and open reading frames to cDNA isolation: revisiting the human chromosome 21 transcription map.</title>
        <authorList>
            <person name="Reymond A."/>
            <person name="Friedli M."/>
            <person name="Neergaard Henrichsen C."/>
            <person name="Chapot F."/>
            <person name="Deutsch S."/>
            <person name="Ucla C."/>
            <person name="Rossier C."/>
            <person name="Lyle R."/>
            <person name="Guipponi M."/>
            <person name="Antonarakis S.E."/>
        </authorList>
    </citation>
    <scope>NUCLEOTIDE SEQUENCE [MRNA]</scope>
</reference>
<reference key="2">
    <citation type="journal article" date="2009" name="PLoS Biol.">
        <title>Lineage-specific biology revealed by a finished genome assembly of the mouse.</title>
        <authorList>
            <person name="Church D.M."/>
            <person name="Goodstadt L."/>
            <person name="Hillier L.W."/>
            <person name="Zody M.C."/>
            <person name="Goldstein S."/>
            <person name="She X."/>
            <person name="Bult C.J."/>
            <person name="Agarwala R."/>
            <person name="Cherry J.L."/>
            <person name="DiCuccio M."/>
            <person name="Hlavina W."/>
            <person name="Kapustin Y."/>
            <person name="Meric P."/>
            <person name="Maglott D."/>
            <person name="Birtle Z."/>
            <person name="Marques A.C."/>
            <person name="Graves T."/>
            <person name="Zhou S."/>
            <person name="Teague B."/>
            <person name="Potamousis K."/>
            <person name="Churas C."/>
            <person name="Place M."/>
            <person name="Herschleb J."/>
            <person name="Runnheim R."/>
            <person name="Forrest D."/>
            <person name="Amos-Landgraf J."/>
            <person name="Schwartz D.C."/>
            <person name="Cheng Z."/>
            <person name="Lindblad-Toh K."/>
            <person name="Eichler E.E."/>
            <person name="Ponting C.P."/>
        </authorList>
    </citation>
    <scope>NUCLEOTIDE SEQUENCE [LARGE SCALE GENOMIC DNA]</scope>
    <source>
        <strain>C57BL/6J</strain>
    </source>
</reference>
<reference key="3">
    <citation type="submission" date="2005-09" db="EMBL/GenBank/DDBJ databases">
        <authorList>
            <person name="Mural R.J."/>
            <person name="Adams M.D."/>
            <person name="Myers E.W."/>
            <person name="Smith H.O."/>
            <person name="Venter J.C."/>
        </authorList>
    </citation>
    <scope>NUCLEOTIDE SEQUENCE [LARGE SCALE GENOMIC DNA]</scope>
</reference>
<reference key="4">
    <citation type="journal article" date="2019" name="Mol. Immunol.">
        <title>The novel methyltransferase SETD4 regulates TLR agonist-induced expression of cytokines through methylation of lysine 4 at histone 3 in macrophages.</title>
        <authorList>
            <person name="Zhong Y."/>
            <person name="Ye P."/>
            <person name="Mei Z."/>
            <person name="Huang S."/>
            <person name="Huang M."/>
            <person name="Li Y."/>
            <person name="Niu S."/>
            <person name="Zhao S."/>
            <person name="Cai J."/>
            <person name="Wang J."/>
            <person name="Zou H."/>
            <person name="Jiang Y."/>
            <person name="Liu J."/>
        </authorList>
    </citation>
    <scope>FUNCTION</scope>
    <scope>CATALYTIC ACTIVITY</scope>
    <scope>SUBCELLULAR LOCATION</scope>
</reference>
<reference key="5">
    <citation type="journal article" date="2020" name="DNA Repair">
        <title>Loss of Setd4 delays radiation-induced thymic lymphoma in mice.</title>
        <authorList>
            <person name="Feng X."/>
            <person name="Lu H."/>
            <person name="Yue J."/>
            <person name="Schneider N."/>
            <person name="Liu J."/>
            <person name="Denzin L.K."/>
            <person name="Chan C.S."/>
            <person name="De S."/>
            <person name="Shen Z."/>
        </authorList>
    </citation>
    <scope>FUNCTION</scope>
    <scope>DISRUPTION PHENOTYPE</scope>
</reference>
<reference key="6">
    <citation type="journal article" date="2020" name="Int. J. Radiat. Oncol. Biol. Phys.">
        <title>Deletion of mouse Setd4 promotes the recovery of hematopoietic failure.</title>
        <authorList>
            <person name="Feng X."/>
            <person name="Lu H."/>
            <person name="Yue J."/>
            <person name="Shettigar M."/>
            <person name="Liu J."/>
            <person name="Denzin L.K."/>
            <person name="Shen Z."/>
        </authorList>
    </citation>
    <scope>DISRUPTION PHENOTYPE</scope>
</reference>
<reference key="7">
    <citation type="journal article" date="2021" name="Stem. Cell. Rev. Rep.">
        <title>SETD4 in the proliferation, migration, angiogenesis, myogenic differentiation and genomic methylation of bone marrow mesenchymal stem cells.</title>
        <authorList>
            <person name="Liao X."/>
            <person name="Wu C."/>
            <person name="Shao Z."/>
            <person name="Zhang S."/>
            <person name="Zou Y."/>
            <person name="Wang K."/>
            <person name="Ha Y."/>
            <person name="Xing J."/>
            <person name="Zheng A."/>
            <person name="Shen Z."/>
            <person name="Zheng S."/>
            <person name="Guo J."/>
            <person name="Jie W."/>
        </authorList>
    </citation>
    <scope>FUNCTION</scope>
    <scope>DISRUPTION PHENOTYPE</scope>
</reference>
<reference key="8">
    <citation type="journal article" date="2022" name="Stem Cell Reports">
        <title>SETD4 cells contribute to brain development and maintain adult stem cell reservoir for neurogenesis.</title>
        <authorList>
            <person name="Cai S.L."/>
            <person name="Yang Y.S."/>
            <person name="Ding Y.F."/>
            <person name="Yang S.H."/>
            <person name="Jia X.Z."/>
            <person name="Gu Y.W."/>
            <person name="Wood C."/>
            <person name="Huang X.T."/>
            <person name="Yang J.S."/>
            <person name="Yang W.J."/>
        </authorList>
    </citation>
    <scope>TISSUE SPECIFICITY</scope>
    <scope>DEVELOPMENTAL STAGE</scope>
</reference>
<accession>P58467</accession>
<accession>G3X9W6</accession>
<dbReference type="EC" id="2.1.1.-" evidence="1"/>
<dbReference type="EC" id="2.1.1.364" evidence="4"/>
<dbReference type="EMBL" id="AY037804">
    <property type="protein sequence ID" value="AAK68849.1"/>
    <property type="molecule type" value="mRNA"/>
</dbReference>
<dbReference type="EMBL" id="AC160993">
    <property type="status" value="NOT_ANNOTATED_CDS"/>
    <property type="molecule type" value="Genomic_DNA"/>
</dbReference>
<dbReference type="EMBL" id="CH466602">
    <property type="protein sequence ID" value="EDL03771.1"/>
    <property type="molecule type" value="Genomic_DNA"/>
</dbReference>
<dbReference type="CCDS" id="CCDS28340.1"/>
<dbReference type="RefSeq" id="NP_001404050.1">
    <property type="nucleotide sequence ID" value="NM_001417121.1"/>
</dbReference>
<dbReference type="RefSeq" id="NP_001404051.1">
    <property type="nucleotide sequence ID" value="NM_001417122.1"/>
</dbReference>
<dbReference type="RefSeq" id="NP_001404052.1">
    <property type="nucleotide sequence ID" value="NM_001417123.1"/>
</dbReference>
<dbReference type="RefSeq" id="NP_001404053.1">
    <property type="nucleotide sequence ID" value="NM_001417124.1"/>
</dbReference>
<dbReference type="RefSeq" id="NP_663457.2">
    <property type="nucleotide sequence ID" value="NM_145482.4"/>
</dbReference>
<dbReference type="RefSeq" id="XP_006523078.1">
    <property type="nucleotide sequence ID" value="XM_006523015.3"/>
</dbReference>
<dbReference type="RefSeq" id="XP_006523079.1">
    <property type="nucleotide sequence ID" value="XM_006523016.3"/>
</dbReference>
<dbReference type="RefSeq" id="XP_006523080.1">
    <property type="nucleotide sequence ID" value="XM_006523017.3"/>
</dbReference>
<dbReference type="RefSeq" id="XP_006523081.1">
    <property type="nucleotide sequence ID" value="XM_006523018.3"/>
</dbReference>
<dbReference type="SMR" id="P58467"/>
<dbReference type="FunCoup" id="P58467">
    <property type="interactions" value="1919"/>
</dbReference>
<dbReference type="STRING" id="10090.ENSMUSP00000156723"/>
<dbReference type="PhosphoSitePlus" id="P58467"/>
<dbReference type="PaxDb" id="10090-ENSMUSP00000109584"/>
<dbReference type="Antibodypedia" id="8172">
    <property type="antibodies" value="115 antibodies from 21 providers"/>
</dbReference>
<dbReference type="DNASU" id="224440"/>
<dbReference type="Ensembl" id="ENSMUST00000023669.14">
    <property type="protein sequence ID" value="ENSMUSP00000023669.6"/>
    <property type="gene ID" value="ENSMUSG00000022948.17"/>
</dbReference>
<dbReference type="Ensembl" id="ENSMUST00000233931.2">
    <property type="protein sequence ID" value="ENSMUSP00000156723.2"/>
    <property type="gene ID" value="ENSMUSG00000022948.17"/>
</dbReference>
<dbReference type="GeneID" id="224440"/>
<dbReference type="KEGG" id="mmu:224440"/>
<dbReference type="UCSC" id="uc007zzq.2">
    <property type="organism name" value="mouse"/>
</dbReference>
<dbReference type="AGR" id="MGI:2136890"/>
<dbReference type="CTD" id="54093"/>
<dbReference type="MGI" id="MGI:2136890">
    <property type="gene designation" value="Setd4"/>
</dbReference>
<dbReference type="VEuPathDB" id="HostDB:ENSMUSG00000022948"/>
<dbReference type="eggNOG" id="KOG1337">
    <property type="taxonomic scope" value="Eukaryota"/>
</dbReference>
<dbReference type="GeneTree" id="ENSGT00940000153577"/>
<dbReference type="HOGENOM" id="CLU_029120_3_0_1"/>
<dbReference type="InParanoid" id="P58467"/>
<dbReference type="OMA" id="ISHMKDE"/>
<dbReference type="OrthoDB" id="341421at2759"/>
<dbReference type="PhylomeDB" id="P58467"/>
<dbReference type="TreeFam" id="TF106421"/>
<dbReference type="BioGRID-ORCS" id="224440">
    <property type="hits" value="3 hits in 80 CRISPR screens"/>
</dbReference>
<dbReference type="ChiTaRS" id="Setd4">
    <property type="organism name" value="mouse"/>
</dbReference>
<dbReference type="PRO" id="PR:P58467"/>
<dbReference type="Proteomes" id="UP000000589">
    <property type="component" value="Chromosome 16"/>
</dbReference>
<dbReference type="RNAct" id="P58467">
    <property type="molecule type" value="protein"/>
</dbReference>
<dbReference type="Bgee" id="ENSMUSG00000022948">
    <property type="expression patterns" value="Expressed in primary oocyte and 246 other cell types or tissues"/>
</dbReference>
<dbReference type="ExpressionAtlas" id="P58467">
    <property type="expression patterns" value="baseline and differential"/>
</dbReference>
<dbReference type="GO" id="GO:0005829">
    <property type="term" value="C:cytosol"/>
    <property type="evidence" value="ECO:0000250"/>
    <property type="project" value="UniProtKB"/>
</dbReference>
<dbReference type="GO" id="GO:0005634">
    <property type="term" value="C:nucleus"/>
    <property type="evidence" value="ECO:0000250"/>
    <property type="project" value="UniProtKB"/>
</dbReference>
<dbReference type="GO" id="GO:0042800">
    <property type="term" value="F:histone H3K4 methyltransferase activity"/>
    <property type="evidence" value="ECO:0000314"/>
    <property type="project" value="UniProtKB"/>
</dbReference>
<dbReference type="GO" id="GO:0140945">
    <property type="term" value="F:histone H3K4 monomethyltransferase activity"/>
    <property type="evidence" value="ECO:0007669"/>
    <property type="project" value="UniProtKB-EC"/>
</dbReference>
<dbReference type="GO" id="GO:0042799">
    <property type="term" value="F:histone H4K20 methyltransferase activity"/>
    <property type="evidence" value="ECO:0000250"/>
    <property type="project" value="UniProtKB"/>
</dbReference>
<dbReference type="GO" id="GO:0140944">
    <property type="term" value="F:histone H4K20 monomethyltransferase activity"/>
    <property type="evidence" value="ECO:0007669"/>
    <property type="project" value="RHEA"/>
</dbReference>
<dbReference type="GO" id="GO:0140941">
    <property type="term" value="F:histone H4K20me methyltransferase activity"/>
    <property type="evidence" value="ECO:0007669"/>
    <property type="project" value="RHEA"/>
</dbReference>
<dbReference type="GO" id="GO:0006338">
    <property type="term" value="P:chromatin remodeling"/>
    <property type="evidence" value="ECO:0000314"/>
    <property type="project" value="UniProtKB"/>
</dbReference>
<dbReference type="GO" id="GO:0006954">
    <property type="term" value="P:inflammatory response"/>
    <property type="evidence" value="ECO:0007669"/>
    <property type="project" value="UniProtKB-KW"/>
</dbReference>
<dbReference type="GO" id="GO:0032259">
    <property type="term" value="P:methylation"/>
    <property type="evidence" value="ECO:0007669"/>
    <property type="project" value="UniProtKB-KW"/>
</dbReference>
<dbReference type="GO" id="GO:0050729">
    <property type="term" value="P:positive regulation of inflammatory response"/>
    <property type="evidence" value="ECO:0000314"/>
    <property type="project" value="UniProtKB"/>
</dbReference>
<dbReference type="GO" id="GO:0032755">
    <property type="term" value="P:positive regulation of interleukin-6 production"/>
    <property type="evidence" value="ECO:0000314"/>
    <property type="project" value="UniProtKB"/>
</dbReference>
<dbReference type="GO" id="GO:0032760">
    <property type="term" value="P:positive regulation of tumor necrosis factor production"/>
    <property type="evidence" value="ECO:0000314"/>
    <property type="project" value="UniProtKB"/>
</dbReference>
<dbReference type="GO" id="GO:0071863">
    <property type="term" value="P:regulation of cell proliferation in bone marrow"/>
    <property type="evidence" value="ECO:0000315"/>
    <property type="project" value="UniProtKB"/>
</dbReference>
<dbReference type="CDD" id="cd19177">
    <property type="entry name" value="SET_SETD4"/>
    <property type="match status" value="1"/>
</dbReference>
<dbReference type="FunFam" id="3.90.1420.10:FF:000008">
    <property type="entry name" value="SET domain containing 4"/>
    <property type="match status" value="1"/>
</dbReference>
<dbReference type="FunFam" id="3.90.1410.10:FF:000002">
    <property type="entry name" value="SET domain-containing protein 4 isoform X1"/>
    <property type="match status" value="1"/>
</dbReference>
<dbReference type="Gene3D" id="3.90.1420.10">
    <property type="entry name" value="Rubisco LSMT, substrate-binding domain"/>
    <property type="match status" value="1"/>
</dbReference>
<dbReference type="Gene3D" id="3.90.1410.10">
    <property type="entry name" value="set domain protein methyltransferase, domain 1"/>
    <property type="match status" value="1"/>
</dbReference>
<dbReference type="InterPro" id="IPR015353">
    <property type="entry name" value="Rubisco_LSMT_subst-bd"/>
</dbReference>
<dbReference type="InterPro" id="IPR036464">
    <property type="entry name" value="Rubisco_LSMT_subst-bd_sf"/>
</dbReference>
<dbReference type="InterPro" id="IPR001214">
    <property type="entry name" value="SET_dom"/>
</dbReference>
<dbReference type="InterPro" id="IPR046341">
    <property type="entry name" value="SET_dom_sf"/>
</dbReference>
<dbReference type="InterPro" id="IPR016852">
    <property type="entry name" value="SET_MeTrfase"/>
</dbReference>
<dbReference type="InterPro" id="IPR050600">
    <property type="entry name" value="SETD3_SETD6_MTase"/>
</dbReference>
<dbReference type="InterPro" id="IPR044429">
    <property type="entry name" value="SETD4_SET"/>
</dbReference>
<dbReference type="PANTHER" id="PTHR13271:SF151">
    <property type="entry name" value="SET DOMAIN-CONTAINING PROTEIN 4"/>
    <property type="match status" value="1"/>
</dbReference>
<dbReference type="PANTHER" id="PTHR13271">
    <property type="entry name" value="UNCHARACTERIZED PUTATIVE METHYLTRANSFERASE"/>
    <property type="match status" value="1"/>
</dbReference>
<dbReference type="Pfam" id="PF09273">
    <property type="entry name" value="Rubis-subs-bind"/>
    <property type="match status" value="1"/>
</dbReference>
<dbReference type="Pfam" id="PF00856">
    <property type="entry name" value="SET"/>
    <property type="match status" value="1"/>
</dbReference>
<dbReference type="PIRSF" id="PIRSF027158">
    <property type="entry name" value="Lys_MTase_YDR198C_prd"/>
    <property type="match status" value="1"/>
</dbReference>
<dbReference type="SUPFAM" id="SSF82199">
    <property type="entry name" value="SET domain"/>
    <property type="match status" value="1"/>
</dbReference>
<dbReference type="PROSITE" id="PS50280">
    <property type="entry name" value="SET"/>
    <property type="match status" value="1"/>
</dbReference>